<keyword id="KW-0150">Chloroplast</keyword>
<keyword id="KW-0378">Hydrolase</keyword>
<keyword id="KW-0934">Plastid</keyword>
<keyword id="KW-0645">Protease</keyword>
<keyword id="KW-0720">Serine protease</keyword>
<organism>
    <name type="scientific">Hordeum vulgare</name>
    <name type="common">Barley</name>
    <dbReference type="NCBI Taxonomy" id="4513"/>
    <lineage>
        <taxon>Eukaryota</taxon>
        <taxon>Viridiplantae</taxon>
        <taxon>Streptophyta</taxon>
        <taxon>Embryophyta</taxon>
        <taxon>Tracheophyta</taxon>
        <taxon>Spermatophyta</taxon>
        <taxon>Magnoliopsida</taxon>
        <taxon>Liliopsida</taxon>
        <taxon>Poales</taxon>
        <taxon>Poaceae</taxon>
        <taxon>BOP clade</taxon>
        <taxon>Pooideae</taxon>
        <taxon>Triticodae</taxon>
        <taxon>Triticeae</taxon>
        <taxon>Hordeinae</taxon>
        <taxon>Hordeum</taxon>
    </lineage>
</organism>
<accession>P48883</accession>
<accession>A1E9L5</accession>
<protein>
    <recommendedName>
        <fullName evidence="1">ATP-dependent Clp protease proteolytic subunit</fullName>
        <ecNumber evidence="1">3.4.21.92</ecNumber>
    </recommendedName>
    <alternativeName>
        <fullName evidence="1">Endopeptidase Clp</fullName>
    </alternativeName>
</protein>
<proteinExistence type="inferred from homology"/>
<name>CLPP_HORVU</name>
<evidence type="ECO:0000255" key="1">
    <source>
        <dbReference type="HAMAP-Rule" id="MF_00444"/>
    </source>
</evidence>
<gene>
    <name evidence="1" type="primary">clpP</name>
</gene>
<reference key="1">
    <citation type="journal article" date="2007" name="Theor. Appl. Genet.">
        <title>Complete chloroplast genome sequences of Hordeum vulgare, Sorghum bicolor and Agrostis stolonifera, and comparative analyses with other grass genomes.</title>
        <authorList>
            <person name="Saski C."/>
            <person name="Lee S.-B."/>
            <person name="Fjellheim S."/>
            <person name="Guda C."/>
            <person name="Jansen R.K."/>
            <person name="Luo H."/>
            <person name="Tomkins J."/>
            <person name="Rognli O.A."/>
            <person name="Daniell H."/>
            <person name="Clarke J.L."/>
        </authorList>
    </citation>
    <scope>NUCLEOTIDE SEQUENCE [LARGE SCALE GENOMIC DNA]</scope>
    <source>
        <strain>cv. Morex</strain>
    </source>
</reference>
<reference key="2">
    <citation type="journal article" date="1996" name="Plant Mol. Biol.">
        <title>Impaired splicing of the rps12 transcript in ribosome-deficient plastids.</title>
        <authorList>
            <person name="Huebschmann T."/>
            <person name="Hess W."/>
            <person name="Boerner T."/>
        </authorList>
    </citation>
    <scope>NUCLEOTIDE SEQUENCE [GENOMIC DNA] OF 193-216</scope>
    <source>
        <strain>cv. Haisa</strain>
    </source>
</reference>
<geneLocation type="chloroplast"/>
<dbReference type="EC" id="3.4.21.92" evidence="1"/>
<dbReference type="EMBL" id="EF115541">
    <property type="protein sequence ID" value="ABK79436.1"/>
    <property type="molecule type" value="Genomic_DNA"/>
</dbReference>
<dbReference type="EMBL" id="X89562">
    <property type="protein sequence ID" value="CAA61738.1"/>
    <property type="molecule type" value="Genomic_DNA"/>
</dbReference>
<dbReference type="PIR" id="S65047">
    <property type="entry name" value="S65047"/>
</dbReference>
<dbReference type="RefSeq" id="YP_010144449.1">
    <property type="nucleotide sequence ID" value="NC_056985.1"/>
</dbReference>
<dbReference type="RefSeq" id="YP_874677.1">
    <property type="nucleotide sequence ID" value="NC_008590.1"/>
</dbReference>
<dbReference type="SMR" id="P48883"/>
<dbReference type="MEROPS" id="S14.002"/>
<dbReference type="GeneID" id="4525074"/>
<dbReference type="GeneID" id="67140683"/>
<dbReference type="OMA" id="GEEDSVW"/>
<dbReference type="GO" id="GO:0009570">
    <property type="term" value="C:chloroplast stroma"/>
    <property type="evidence" value="ECO:0007669"/>
    <property type="project" value="UniProtKB-SubCell"/>
</dbReference>
<dbReference type="GO" id="GO:0004176">
    <property type="term" value="F:ATP-dependent peptidase activity"/>
    <property type="evidence" value="ECO:0007669"/>
    <property type="project" value="InterPro"/>
</dbReference>
<dbReference type="GO" id="GO:0004252">
    <property type="term" value="F:serine-type endopeptidase activity"/>
    <property type="evidence" value="ECO:0007669"/>
    <property type="project" value="UniProtKB-UniRule"/>
</dbReference>
<dbReference type="GO" id="GO:0006508">
    <property type="term" value="P:proteolysis"/>
    <property type="evidence" value="ECO:0007669"/>
    <property type="project" value="UniProtKB-UniRule"/>
</dbReference>
<dbReference type="CDD" id="cd07017">
    <property type="entry name" value="S14_ClpP_2"/>
    <property type="match status" value="1"/>
</dbReference>
<dbReference type="FunFam" id="3.90.226.10:FF:000006">
    <property type="entry name" value="ATP-dependent Clp protease proteolytic subunit"/>
    <property type="match status" value="1"/>
</dbReference>
<dbReference type="Gene3D" id="3.90.226.10">
    <property type="entry name" value="2-enoyl-CoA Hydratase, Chain A, domain 1"/>
    <property type="match status" value="1"/>
</dbReference>
<dbReference type="HAMAP" id="MF_00444">
    <property type="entry name" value="ClpP"/>
    <property type="match status" value="1"/>
</dbReference>
<dbReference type="InterPro" id="IPR001907">
    <property type="entry name" value="ClpP"/>
</dbReference>
<dbReference type="InterPro" id="IPR029045">
    <property type="entry name" value="ClpP/crotonase-like_dom_sf"/>
</dbReference>
<dbReference type="InterPro" id="IPR023562">
    <property type="entry name" value="ClpP/TepA"/>
</dbReference>
<dbReference type="InterPro" id="IPR033135">
    <property type="entry name" value="ClpP_His_AS"/>
</dbReference>
<dbReference type="InterPro" id="IPR018215">
    <property type="entry name" value="ClpP_Ser_AS"/>
</dbReference>
<dbReference type="PANTHER" id="PTHR48481">
    <property type="entry name" value="ATP-DEPENDENT CLP PROTEASE PROTEOLYTIC SUBUNIT"/>
    <property type="match status" value="1"/>
</dbReference>
<dbReference type="PANTHER" id="PTHR48481:SF1">
    <property type="entry name" value="ATP-DEPENDENT CLP PROTEASE PROTEOLYTIC SUBUNIT"/>
    <property type="match status" value="1"/>
</dbReference>
<dbReference type="Pfam" id="PF00574">
    <property type="entry name" value="CLP_protease"/>
    <property type="match status" value="1"/>
</dbReference>
<dbReference type="PRINTS" id="PR00127">
    <property type="entry name" value="CLPPROTEASEP"/>
</dbReference>
<dbReference type="SUPFAM" id="SSF52096">
    <property type="entry name" value="ClpP/crotonase"/>
    <property type="match status" value="1"/>
</dbReference>
<dbReference type="PROSITE" id="PS00382">
    <property type="entry name" value="CLP_PROTEASE_HIS"/>
    <property type="match status" value="1"/>
</dbReference>
<dbReference type="PROSITE" id="PS00381">
    <property type="entry name" value="CLP_PROTEASE_SER"/>
    <property type="match status" value="1"/>
</dbReference>
<feature type="chain" id="PRO_0000179740" description="ATP-dependent Clp protease proteolytic subunit">
    <location>
        <begin position="1"/>
        <end position="216"/>
    </location>
</feature>
<feature type="active site" description="Nucleophile" evidence="1">
    <location>
        <position position="101"/>
    </location>
</feature>
<feature type="active site" evidence="1">
    <location>
        <position position="126"/>
    </location>
</feature>
<comment type="function">
    <text evidence="1">Cleaves peptides in various proteins in a process that requires ATP hydrolysis. Has a chymotrypsin-like activity. Plays a major role in the degradation of misfolded proteins.</text>
</comment>
<comment type="catalytic activity">
    <reaction evidence="1">
        <text>Hydrolysis of proteins to small peptides in the presence of ATP and magnesium. alpha-casein is the usual test substrate. In the absence of ATP, only oligopeptides shorter than five residues are hydrolyzed (such as succinyl-Leu-Tyr-|-NHMec, and Leu-Tyr-Leu-|-Tyr-Trp, in which cleavage of the -Tyr-|-Leu- and -Tyr-|-Trp bonds also occurs).</text>
        <dbReference type="EC" id="3.4.21.92"/>
    </reaction>
</comment>
<comment type="subunit">
    <text>Component of the chloroplastic Clp protease core complex.</text>
</comment>
<comment type="subcellular location">
    <subcellularLocation>
        <location evidence="1">Plastid</location>
        <location evidence="1">Chloroplast stroma</location>
    </subcellularLocation>
</comment>
<comment type="similarity">
    <text evidence="1">Belongs to the peptidase S14 family.</text>
</comment>
<sequence length="216" mass="24711">MPIGVPKVPYRIPGDEEATWVDLYNVMYRERTLFLGQEIRCEITNHITGLMVYLSIEDGISDIFLFINSPGGWLISGMAIFDTMQTVTPDIYTICLGIAASMASFILLGGEPAKRIAFPHARIMLHQPASAYYRARTPEFLLEVEELHKVREMITRVYALRTGKPFWVVSEDMERDVFMSADEAKAYGLVDIVGDEMIDKHCDTDPVWFPEMFKDW</sequence>